<protein>
    <recommendedName>
        <fullName evidence="1">UPF0179 protein Pars_2336</fullName>
    </recommendedName>
</protein>
<dbReference type="EMBL" id="CP000660">
    <property type="protein sequence ID" value="ABP51880.1"/>
    <property type="molecule type" value="Genomic_DNA"/>
</dbReference>
<dbReference type="RefSeq" id="WP_011901783.1">
    <property type="nucleotide sequence ID" value="NC_009376.1"/>
</dbReference>
<dbReference type="STRING" id="340102.Pars_2336"/>
<dbReference type="GeneID" id="5055593"/>
<dbReference type="KEGG" id="pas:Pars_2336"/>
<dbReference type="HOGENOM" id="CLU_121764_0_0_2"/>
<dbReference type="OrthoDB" id="24613at2157"/>
<dbReference type="PhylomeDB" id="A4WNB3"/>
<dbReference type="Proteomes" id="UP000001567">
    <property type="component" value="Chromosome"/>
</dbReference>
<dbReference type="HAMAP" id="MF_00498">
    <property type="entry name" value="UPF0179"/>
    <property type="match status" value="1"/>
</dbReference>
<dbReference type="InterPro" id="IPR005369">
    <property type="entry name" value="UPF0179"/>
</dbReference>
<dbReference type="PANTHER" id="PTHR40699">
    <property type="entry name" value="UPF0179 PROTEIN MJ1627"/>
    <property type="match status" value="1"/>
</dbReference>
<dbReference type="PANTHER" id="PTHR40699:SF1">
    <property type="entry name" value="UPF0179 PROTEIN MJ1627"/>
    <property type="match status" value="1"/>
</dbReference>
<dbReference type="Pfam" id="PF03684">
    <property type="entry name" value="UPF0179"/>
    <property type="match status" value="1"/>
</dbReference>
<name>Y2336_PYRAR</name>
<sequence>MKRVVTLVSKEQAEVGHRFRVFSVPDECKSCRLFSVCLGRLTPGRSYKVVEVRPSMGQRCKITDSEMVPVVVEEAPIVGLLPLNKALEGVVVTYEDECAGCEGCPNDVVKKGEKVKVVKILGRKKCRNKEFAIVEFFVVSAPSHAVLDSSKTAQAPSRAPSSRRPLK</sequence>
<organism>
    <name type="scientific">Pyrobaculum arsenaticum (strain DSM 13514 / JCM 11321 / PZ6)</name>
    <dbReference type="NCBI Taxonomy" id="340102"/>
    <lineage>
        <taxon>Archaea</taxon>
        <taxon>Thermoproteota</taxon>
        <taxon>Thermoprotei</taxon>
        <taxon>Thermoproteales</taxon>
        <taxon>Thermoproteaceae</taxon>
        <taxon>Pyrobaculum</taxon>
    </lineage>
</organism>
<proteinExistence type="inferred from homology"/>
<accession>A4WNB3</accession>
<feature type="chain" id="PRO_0000378135" description="UPF0179 protein Pars_2336">
    <location>
        <begin position="1"/>
        <end position="167"/>
    </location>
</feature>
<gene>
    <name type="ordered locus">Pars_2336</name>
</gene>
<comment type="similarity">
    <text evidence="1">Belongs to the UPF0179 family.</text>
</comment>
<reference key="1">
    <citation type="submission" date="2007-04" db="EMBL/GenBank/DDBJ databases">
        <title>Complete sequence of Pyrobaculum arsenaticum DSM 13514.</title>
        <authorList>
            <consortium name="US DOE Joint Genome Institute"/>
            <person name="Copeland A."/>
            <person name="Lucas S."/>
            <person name="Lapidus A."/>
            <person name="Barry K."/>
            <person name="Glavina del Rio T."/>
            <person name="Dalin E."/>
            <person name="Tice H."/>
            <person name="Pitluck S."/>
            <person name="Chain P."/>
            <person name="Malfatti S."/>
            <person name="Shin M."/>
            <person name="Vergez L."/>
            <person name="Schmutz J."/>
            <person name="Larimer F."/>
            <person name="Land M."/>
            <person name="Hauser L."/>
            <person name="Kyrpides N."/>
            <person name="Mikhailova N."/>
            <person name="Cozen A.E."/>
            <person name="Fitz-Gibbon S.T."/>
            <person name="House C.H."/>
            <person name="Saltikov C."/>
            <person name="Lowe T.M."/>
            <person name="Richardson P."/>
        </authorList>
    </citation>
    <scope>NUCLEOTIDE SEQUENCE [LARGE SCALE GENOMIC DNA]</scope>
    <source>
        <strain>ATCC 700994 / DSM 13514 / JCM 11321 / PZ6</strain>
    </source>
</reference>
<evidence type="ECO:0000255" key="1">
    <source>
        <dbReference type="HAMAP-Rule" id="MF_00498"/>
    </source>
</evidence>